<reference key="1">
    <citation type="journal article" date="2009" name="PLoS Biol.">
        <title>Lineage-specific biology revealed by a finished genome assembly of the mouse.</title>
        <authorList>
            <person name="Church D.M."/>
            <person name="Goodstadt L."/>
            <person name="Hillier L.W."/>
            <person name="Zody M.C."/>
            <person name="Goldstein S."/>
            <person name="She X."/>
            <person name="Bult C.J."/>
            <person name="Agarwala R."/>
            <person name="Cherry J.L."/>
            <person name="DiCuccio M."/>
            <person name="Hlavina W."/>
            <person name="Kapustin Y."/>
            <person name="Meric P."/>
            <person name="Maglott D."/>
            <person name="Birtle Z."/>
            <person name="Marques A.C."/>
            <person name="Graves T."/>
            <person name="Zhou S."/>
            <person name="Teague B."/>
            <person name="Potamousis K."/>
            <person name="Churas C."/>
            <person name="Place M."/>
            <person name="Herschleb J."/>
            <person name="Runnheim R."/>
            <person name="Forrest D."/>
            <person name="Amos-Landgraf J."/>
            <person name="Schwartz D.C."/>
            <person name="Cheng Z."/>
            <person name="Lindblad-Toh K."/>
            <person name="Eichler E.E."/>
            <person name="Ponting C.P."/>
        </authorList>
    </citation>
    <scope>NUCLEOTIDE SEQUENCE [LARGE SCALE GENOMIC DNA]</scope>
    <source>
        <strain>C57BL/6J</strain>
    </source>
</reference>
<reference key="2">
    <citation type="journal article" date="2005" name="Science">
        <title>The transcriptional landscape of the mammalian genome.</title>
        <authorList>
            <person name="Carninci P."/>
            <person name="Kasukawa T."/>
            <person name="Katayama S."/>
            <person name="Gough J."/>
            <person name="Frith M.C."/>
            <person name="Maeda N."/>
            <person name="Oyama R."/>
            <person name="Ravasi T."/>
            <person name="Lenhard B."/>
            <person name="Wells C."/>
            <person name="Kodzius R."/>
            <person name="Shimokawa K."/>
            <person name="Bajic V.B."/>
            <person name="Brenner S.E."/>
            <person name="Batalov S."/>
            <person name="Forrest A.R."/>
            <person name="Zavolan M."/>
            <person name="Davis M.J."/>
            <person name="Wilming L.G."/>
            <person name="Aidinis V."/>
            <person name="Allen J.E."/>
            <person name="Ambesi-Impiombato A."/>
            <person name="Apweiler R."/>
            <person name="Aturaliya R.N."/>
            <person name="Bailey T.L."/>
            <person name="Bansal M."/>
            <person name="Baxter L."/>
            <person name="Beisel K.W."/>
            <person name="Bersano T."/>
            <person name="Bono H."/>
            <person name="Chalk A.M."/>
            <person name="Chiu K.P."/>
            <person name="Choudhary V."/>
            <person name="Christoffels A."/>
            <person name="Clutterbuck D.R."/>
            <person name="Crowe M.L."/>
            <person name="Dalla E."/>
            <person name="Dalrymple B.P."/>
            <person name="de Bono B."/>
            <person name="Della Gatta G."/>
            <person name="di Bernardo D."/>
            <person name="Down T."/>
            <person name="Engstrom P."/>
            <person name="Fagiolini M."/>
            <person name="Faulkner G."/>
            <person name="Fletcher C.F."/>
            <person name="Fukushima T."/>
            <person name="Furuno M."/>
            <person name="Futaki S."/>
            <person name="Gariboldi M."/>
            <person name="Georgii-Hemming P."/>
            <person name="Gingeras T.R."/>
            <person name="Gojobori T."/>
            <person name="Green R.E."/>
            <person name="Gustincich S."/>
            <person name="Harbers M."/>
            <person name="Hayashi Y."/>
            <person name="Hensch T.K."/>
            <person name="Hirokawa N."/>
            <person name="Hill D."/>
            <person name="Huminiecki L."/>
            <person name="Iacono M."/>
            <person name="Ikeo K."/>
            <person name="Iwama A."/>
            <person name="Ishikawa T."/>
            <person name="Jakt M."/>
            <person name="Kanapin A."/>
            <person name="Katoh M."/>
            <person name="Kawasawa Y."/>
            <person name="Kelso J."/>
            <person name="Kitamura H."/>
            <person name="Kitano H."/>
            <person name="Kollias G."/>
            <person name="Krishnan S.P."/>
            <person name="Kruger A."/>
            <person name="Kummerfeld S.K."/>
            <person name="Kurochkin I.V."/>
            <person name="Lareau L.F."/>
            <person name="Lazarevic D."/>
            <person name="Lipovich L."/>
            <person name="Liu J."/>
            <person name="Liuni S."/>
            <person name="McWilliam S."/>
            <person name="Madan Babu M."/>
            <person name="Madera M."/>
            <person name="Marchionni L."/>
            <person name="Matsuda H."/>
            <person name="Matsuzawa S."/>
            <person name="Miki H."/>
            <person name="Mignone F."/>
            <person name="Miyake S."/>
            <person name="Morris K."/>
            <person name="Mottagui-Tabar S."/>
            <person name="Mulder N."/>
            <person name="Nakano N."/>
            <person name="Nakauchi H."/>
            <person name="Ng P."/>
            <person name="Nilsson R."/>
            <person name="Nishiguchi S."/>
            <person name="Nishikawa S."/>
            <person name="Nori F."/>
            <person name="Ohara O."/>
            <person name="Okazaki Y."/>
            <person name="Orlando V."/>
            <person name="Pang K.C."/>
            <person name="Pavan W.J."/>
            <person name="Pavesi G."/>
            <person name="Pesole G."/>
            <person name="Petrovsky N."/>
            <person name="Piazza S."/>
            <person name="Reed J."/>
            <person name="Reid J.F."/>
            <person name="Ring B.Z."/>
            <person name="Ringwald M."/>
            <person name="Rost B."/>
            <person name="Ruan Y."/>
            <person name="Salzberg S.L."/>
            <person name="Sandelin A."/>
            <person name="Schneider C."/>
            <person name="Schoenbach C."/>
            <person name="Sekiguchi K."/>
            <person name="Semple C.A."/>
            <person name="Seno S."/>
            <person name="Sessa L."/>
            <person name="Sheng Y."/>
            <person name="Shibata Y."/>
            <person name="Shimada H."/>
            <person name="Shimada K."/>
            <person name="Silva D."/>
            <person name="Sinclair B."/>
            <person name="Sperling S."/>
            <person name="Stupka E."/>
            <person name="Sugiura K."/>
            <person name="Sultana R."/>
            <person name="Takenaka Y."/>
            <person name="Taki K."/>
            <person name="Tammoja K."/>
            <person name="Tan S.L."/>
            <person name="Tang S."/>
            <person name="Taylor M.S."/>
            <person name="Tegner J."/>
            <person name="Teichmann S.A."/>
            <person name="Ueda H.R."/>
            <person name="van Nimwegen E."/>
            <person name="Verardo R."/>
            <person name="Wei C.L."/>
            <person name="Yagi K."/>
            <person name="Yamanishi H."/>
            <person name="Zabarovsky E."/>
            <person name="Zhu S."/>
            <person name="Zimmer A."/>
            <person name="Hide W."/>
            <person name="Bult C."/>
            <person name="Grimmond S.M."/>
            <person name="Teasdale R.D."/>
            <person name="Liu E.T."/>
            <person name="Brusic V."/>
            <person name="Quackenbush J."/>
            <person name="Wahlestedt C."/>
            <person name="Mattick J.S."/>
            <person name="Hume D.A."/>
            <person name="Kai C."/>
            <person name="Sasaki D."/>
            <person name="Tomaru Y."/>
            <person name="Fukuda S."/>
            <person name="Kanamori-Katayama M."/>
            <person name="Suzuki M."/>
            <person name="Aoki J."/>
            <person name="Arakawa T."/>
            <person name="Iida J."/>
            <person name="Imamura K."/>
            <person name="Itoh M."/>
            <person name="Kato T."/>
            <person name="Kawaji H."/>
            <person name="Kawagashira N."/>
            <person name="Kawashima T."/>
            <person name="Kojima M."/>
            <person name="Kondo S."/>
            <person name="Konno H."/>
            <person name="Nakano K."/>
            <person name="Ninomiya N."/>
            <person name="Nishio T."/>
            <person name="Okada M."/>
            <person name="Plessy C."/>
            <person name="Shibata K."/>
            <person name="Shiraki T."/>
            <person name="Suzuki S."/>
            <person name="Tagami M."/>
            <person name="Waki K."/>
            <person name="Watahiki A."/>
            <person name="Okamura-Oho Y."/>
            <person name="Suzuki H."/>
            <person name="Kawai J."/>
            <person name="Hayashizaki Y."/>
        </authorList>
    </citation>
    <scope>NUCLEOTIDE SEQUENCE [LARGE SCALE MRNA] OF 5-365</scope>
    <source>
        <strain>C57BL/6J</strain>
        <tissue>Testis</tissue>
    </source>
</reference>
<protein>
    <recommendedName>
        <fullName>Mitochondrial protein C2orf69 homolog</fullName>
    </recommendedName>
</protein>
<keyword id="KW-0249">Electron transport</keyword>
<keyword id="KW-0496">Mitochondrion</keyword>
<keyword id="KW-1185">Reference proteome</keyword>
<keyword id="KW-0679">Respiratory chain</keyword>
<keyword id="KW-0809">Transit peptide</keyword>
<keyword id="KW-0813">Transport</keyword>
<proteinExistence type="evidence at transcript level"/>
<name>CB069_MOUSE</name>
<accession>Q9D9H8</accession>
<accession>E9QNR4</accession>
<evidence type="ECO:0000250" key="1">
    <source>
        <dbReference type="UniProtKB" id="Q8N8R5"/>
    </source>
</evidence>
<evidence type="ECO:0000255" key="2"/>
<evidence type="ECO:0000256" key="3">
    <source>
        <dbReference type="SAM" id="MobiDB-lite"/>
    </source>
</evidence>
<evidence type="ECO:0000305" key="4"/>
<organism>
    <name type="scientific">Mus musculus</name>
    <name type="common">Mouse</name>
    <dbReference type="NCBI Taxonomy" id="10090"/>
    <lineage>
        <taxon>Eukaryota</taxon>
        <taxon>Metazoa</taxon>
        <taxon>Chordata</taxon>
        <taxon>Craniata</taxon>
        <taxon>Vertebrata</taxon>
        <taxon>Euteleostomi</taxon>
        <taxon>Mammalia</taxon>
        <taxon>Eutheria</taxon>
        <taxon>Euarchontoglires</taxon>
        <taxon>Glires</taxon>
        <taxon>Rodentia</taxon>
        <taxon>Myomorpha</taxon>
        <taxon>Muroidea</taxon>
        <taxon>Muridae</taxon>
        <taxon>Murinae</taxon>
        <taxon>Mus</taxon>
        <taxon>Mus</taxon>
    </lineage>
</organism>
<dbReference type="EMBL" id="AC161493">
    <property type="status" value="NOT_ANNOTATED_CDS"/>
    <property type="molecule type" value="Genomic_DNA"/>
</dbReference>
<dbReference type="EMBL" id="AK006906">
    <property type="protein sequence ID" value="BAB24787.1"/>
    <property type="status" value="ALT_FRAME"/>
    <property type="molecule type" value="mRNA"/>
</dbReference>
<dbReference type="CCDS" id="CCDS48264.1"/>
<dbReference type="RefSeq" id="NP_082822.1">
    <property type="nucleotide sequence ID" value="NM_028546.1"/>
</dbReference>
<dbReference type="FunCoup" id="Q9D9H8">
    <property type="interactions" value="2750"/>
</dbReference>
<dbReference type="STRING" id="10090.ENSMUSP00000040240"/>
<dbReference type="GlyGen" id="Q9D9H8">
    <property type="glycosylation" value="1 site, 1 N-linked glycan (1 site)"/>
</dbReference>
<dbReference type="PhosphoSitePlus" id="Q9D9H8"/>
<dbReference type="PaxDb" id="10090-ENSMUSP00000040240"/>
<dbReference type="PeptideAtlas" id="Q9D9H8"/>
<dbReference type="Pumba" id="Q9D9H8"/>
<dbReference type="Antibodypedia" id="50407">
    <property type="antibodies" value="36 antibodies from 10 providers"/>
</dbReference>
<dbReference type="Ensembl" id="ENSMUST00000042734.3">
    <property type="protein sequence ID" value="ENSMUSP00000040240.3"/>
    <property type="gene ID" value="ENSMUSG00000038323.4"/>
</dbReference>
<dbReference type="GeneID" id="73467"/>
<dbReference type="KEGG" id="mmu:73467"/>
<dbReference type="UCSC" id="uc007bay.2">
    <property type="organism name" value="mouse"/>
</dbReference>
<dbReference type="AGR" id="MGI:1920717"/>
<dbReference type="MGI" id="MGI:1920717">
    <property type="gene designation" value="1700066M21Rik"/>
</dbReference>
<dbReference type="VEuPathDB" id="HostDB:ENSMUSG00000038323"/>
<dbReference type="eggNOG" id="KOG2800">
    <property type="taxonomic scope" value="Eukaryota"/>
</dbReference>
<dbReference type="GeneTree" id="ENSGT00390000005550"/>
<dbReference type="HOGENOM" id="CLU_028841_1_0_1"/>
<dbReference type="InParanoid" id="Q9D9H8"/>
<dbReference type="OMA" id="DIMSCHP"/>
<dbReference type="OrthoDB" id="419333at2759"/>
<dbReference type="PhylomeDB" id="Q9D9H8"/>
<dbReference type="TreeFam" id="TF343859"/>
<dbReference type="BioGRID-ORCS" id="73467">
    <property type="hits" value="4 hits in 77 CRISPR screens"/>
</dbReference>
<dbReference type="PRO" id="PR:Q9D9H8"/>
<dbReference type="Proteomes" id="UP000000589">
    <property type="component" value="Chromosome 1"/>
</dbReference>
<dbReference type="RNAct" id="Q9D9H8">
    <property type="molecule type" value="protein"/>
</dbReference>
<dbReference type="Bgee" id="ENSMUSG00000038323">
    <property type="expression patterns" value="Expressed in spermatocyte and 234 other cell types or tissues"/>
</dbReference>
<dbReference type="GO" id="GO:0005759">
    <property type="term" value="C:mitochondrial matrix"/>
    <property type="evidence" value="ECO:0007669"/>
    <property type="project" value="UniProtKB-SubCell"/>
</dbReference>
<dbReference type="GO" id="GO:0006119">
    <property type="term" value="P:oxidative phosphorylation"/>
    <property type="evidence" value="ECO:0007669"/>
    <property type="project" value="Ensembl"/>
</dbReference>
<dbReference type="InterPro" id="IPR018881">
    <property type="entry name" value="C2orf69_mit"/>
</dbReference>
<dbReference type="PANTHER" id="PTHR31296:SF1">
    <property type="entry name" value="MITOCHONDRIAL PROTEIN C2ORF69"/>
    <property type="match status" value="1"/>
</dbReference>
<dbReference type="PANTHER" id="PTHR31296">
    <property type="entry name" value="UPF0565 PROTEIN C2ORF69"/>
    <property type="match status" value="1"/>
</dbReference>
<dbReference type="Pfam" id="PF10561">
    <property type="entry name" value="C2orf69"/>
    <property type="match status" value="1"/>
</dbReference>
<comment type="function">
    <text evidence="1">May play a role in the respiratory chain.</text>
</comment>
<comment type="subcellular location">
    <subcellularLocation>
        <location evidence="1">Mitochondrion matrix</location>
    </subcellularLocation>
</comment>
<comment type="similarity">
    <text evidence="4">Belongs to the C2orf69 family.</text>
</comment>
<comment type="sequence caution" evidence="4">
    <conflict type="frameshift">
        <sequence resource="EMBL-CDS" id="BAB24787"/>
    </conflict>
</comment>
<sequence>MLGSRRLRSPALVLLLLRPLLASGDSASRLQTRAMNPGGGERGSPEDSHRLQRSTVPGSDPQRSNELLLLTSREGDSPEQRHHVLYFPGDVQNYHEIMTRHPENYQWENWSLENIATILARRFPNSYIWVIKCSRMHLHKFSCYDNFVKSNMFGAPEHTPDFGAFKHLYMLLVNAFNLTQNGMLFKNRSVWNKDCKASNCESNPSTSNGGQKENERTCEHVDEPSMSFPPLSLDGASFTLIGFSKGCVVLNQLLFELKEAKKDKNIDAFIKSIRTMYWLDGGHSGGSNTWVTYPEVLEEFAQTGITVHTHVTPYQVHDPMRSWIGKEHKKFVQILRDLGMQVTSQIHFAKETPSIENHFRVHEVF</sequence>
<feature type="transit peptide" description="Mitochondrion" evidence="2">
    <location>
        <begin position="1"/>
        <end position="24"/>
    </location>
</feature>
<feature type="chain" id="PRO_0000329089" description="Mitochondrial protein C2orf69 homolog">
    <location>
        <begin position="25"/>
        <end position="365"/>
    </location>
</feature>
<feature type="region of interest" description="Disordered" evidence="3">
    <location>
        <begin position="28"/>
        <end position="64"/>
    </location>
</feature>
<feature type="compositionally biased region" description="Polar residues" evidence="3">
    <location>
        <begin position="53"/>
        <end position="64"/>
    </location>
</feature>
<feature type="sequence conflict" description="In Ref. 2; BAB24787." evidence="4" ref="2">
    <original>W</original>
    <variation>G</variation>
    <location>
        <position position="110"/>
    </location>
</feature>
<feature type="sequence conflict" description="In Ref. 2; BAB24787." evidence="4" ref="2">
    <original>E</original>
    <variation>A</variation>
    <location>
        <position position="157"/>
    </location>
</feature>